<feature type="chain" id="PRO_0000109882" description="Oxygen-dependent coproporphyrinogen-III oxidase">
    <location>
        <begin position="1"/>
        <end position="311"/>
    </location>
</feature>
<feature type="region of interest" description="Important for dimerization" evidence="1">
    <location>
        <begin position="252"/>
        <end position="287"/>
    </location>
</feature>
<feature type="active site" description="Proton donor" evidence="1">
    <location>
        <position position="107"/>
    </location>
</feature>
<feature type="binding site" evidence="1">
    <location>
        <position position="93"/>
    </location>
    <ligand>
        <name>substrate</name>
    </ligand>
</feature>
<feature type="binding site" evidence="1">
    <location>
        <position position="97"/>
    </location>
    <ligand>
        <name>a divalent metal cation</name>
        <dbReference type="ChEBI" id="CHEBI:60240"/>
    </ligand>
</feature>
<feature type="binding site" evidence="1">
    <location>
        <position position="107"/>
    </location>
    <ligand>
        <name>a divalent metal cation</name>
        <dbReference type="ChEBI" id="CHEBI:60240"/>
    </ligand>
</feature>
<feature type="binding site" evidence="1">
    <location>
        <begin position="109"/>
        <end position="111"/>
    </location>
    <ligand>
        <name>substrate</name>
    </ligand>
</feature>
<feature type="binding site" evidence="1">
    <location>
        <position position="153"/>
    </location>
    <ligand>
        <name>a divalent metal cation</name>
        <dbReference type="ChEBI" id="CHEBI:60240"/>
    </ligand>
</feature>
<feature type="binding site" evidence="1">
    <location>
        <position position="184"/>
    </location>
    <ligand>
        <name>a divalent metal cation</name>
        <dbReference type="ChEBI" id="CHEBI:60240"/>
    </ligand>
</feature>
<feature type="binding site" evidence="1">
    <location>
        <begin position="270"/>
        <end position="272"/>
    </location>
    <ligand>
        <name>substrate</name>
    </ligand>
</feature>
<feature type="site" description="Important for dimerization" evidence="1">
    <location>
        <position position="184"/>
    </location>
</feature>
<comment type="function">
    <text evidence="1">Involved in the heme biosynthesis. Catalyzes the aerobic oxidative decarboxylation of propionate groups of rings A and B of coproporphyrinogen-III to yield the vinyl groups in protoporphyrinogen-IX.</text>
</comment>
<comment type="catalytic activity">
    <reaction evidence="1">
        <text>coproporphyrinogen III + O2 + 2 H(+) = protoporphyrinogen IX + 2 CO2 + 2 H2O</text>
        <dbReference type="Rhea" id="RHEA:18257"/>
        <dbReference type="ChEBI" id="CHEBI:15377"/>
        <dbReference type="ChEBI" id="CHEBI:15378"/>
        <dbReference type="ChEBI" id="CHEBI:15379"/>
        <dbReference type="ChEBI" id="CHEBI:16526"/>
        <dbReference type="ChEBI" id="CHEBI:57307"/>
        <dbReference type="ChEBI" id="CHEBI:57309"/>
        <dbReference type="EC" id="1.3.3.3"/>
    </reaction>
</comment>
<comment type="cofactor">
    <cofactor evidence="1">
        <name>a divalent metal cation</name>
        <dbReference type="ChEBI" id="CHEBI:60240"/>
    </cofactor>
</comment>
<comment type="pathway">
    <text evidence="1">Porphyrin-containing compound metabolism; protoporphyrin-IX biosynthesis; protoporphyrinogen-IX from coproporphyrinogen-III (O2 route): step 1/1.</text>
</comment>
<comment type="subunit">
    <text evidence="1">Homodimer.</text>
</comment>
<comment type="subcellular location">
    <subcellularLocation>
        <location evidence="1">Cytoplasm</location>
    </subcellularLocation>
</comment>
<comment type="similarity">
    <text evidence="1">Belongs to the aerobic coproporphyrinogen-III oxidase family.</text>
</comment>
<protein>
    <recommendedName>
        <fullName evidence="1">Oxygen-dependent coproporphyrinogen-III oxidase</fullName>
        <shortName evidence="1">CPO</shortName>
        <shortName evidence="1">Coprogen oxidase</shortName>
        <shortName evidence="1">Coproporphyrinogenase</shortName>
        <ecNumber evidence="1">1.3.3.3</ecNumber>
    </recommendedName>
</protein>
<dbReference type="EC" id="1.3.3.3" evidence="1"/>
<dbReference type="EMBL" id="CR555306">
    <property type="protein sequence ID" value="CAI06731.1"/>
    <property type="molecule type" value="Genomic_DNA"/>
</dbReference>
<dbReference type="RefSeq" id="WP_011236461.1">
    <property type="nucleotide sequence ID" value="NC_006513.1"/>
</dbReference>
<dbReference type="SMR" id="Q5P7I0"/>
<dbReference type="STRING" id="76114.ebA1156"/>
<dbReference type="KEGG" id="eba:ebA1156"/>
<dbReference type="eggNOG" id="COG0408">
    <property type="taxonomic scope" value="Bacteria"/>
</dbReference>
<dbReference type="HOGENOM" id="CLU_026169_0_1_4"/>
<dbReference type="OrthoDB" id="9777553at2"/>
<dbReference type="UniPathway" id="UPA00251">
    <property type="reaction ID" value="UER00322"/>
</dbReference>
<dbReference type="Proteomes" id="UP000006552">
    <property type="component" value="Chromosome"/>
</dbReference>
<dbReference type="GO" id="GO:0005737">
    <property type="term" value="C:cytoplasm"/>
    <property type="evidence" value="ECO:0007669"/>
    <property type="project" value="UniProtKB-SubCell"/>
</dbReference>
<dbReference type="GO" id="GO:0004109">
    <property type="term" value="F:coproporphyrinogen oxidase activity"/>
    <property type="evidence" value="ECO:0007669"/>
    <property type="project" value="UniProtKB-UniRule"/>
</dbReference>
<dbReference type="GO" id="GO:0046872">
    <property type="term" value="F:metal ion binding"/>
    <property type="evidence" value="ECO:0007669"/>
    <property type="project" value="UniProtKB-KW"/>
</dbReference>
<dbReference type="GO" id="GO:0042803">
    <property type="term" value="F:protein homodimerization activity"/>
    <property type="evidence" value="ECO:0000250"/>
    <property type="project" value="UniProtKB"/>
</dbReference>
<dbReference type="GO" id="GO:0006782">
    <property type="term" value="P:protoporphyrinogen IX biosynthetic process"/>
    <property type="evidence" value="ECO:0007669"/>
    <property type="project" value="UniProtKB-UniRule"/>
</dbReference>
<dbReference type="FunFam" id="3.40.1500.10:FF:000001">
    <property type="entry name" value="Oxygen-dependent coproporphyrinogen-III oxidase"/>
    <property type="match status" value="1"/>
</dbReference>
<dbReference type="Gene3D" id="3.40.1500.10">
    <property type="entry name" value="Coproporphyrinogen III oxidase, aerobic"/>
    <property type="match status" value="1"/>
</dbReference>
<dbReference type="HAMAP" id="MF_00333">
    <property type="entry name" value="Coprogen_oxidas"/>
    <property type="match status" value="1"/>
</dbReference>
<dbReference type="InterPro" id="IPR001260">
    <property type="entry name" value="Coprogen_oxidase_aer"/>
</dbReference>
<dbReference type="InterPro" id="IPR036406">
    <property type="entry name" value="Coprogen_oxidase_aer_sf"/>
</dbReference>
<dbReference type="InterPro" id="IPR018375">
    <property type="entry name" value="Coprogen_oxidase_CS"/>
</dbReference>
<dbReference type="NCBIfam" id="NF003727">
    <property type="entry name" value="PRK05330.1"/>
    <property type="match status" value="1"/>
</dbReference>
<dbReference type="PANTHER" id="PTHR10755">
    <property type="entry name" value="COPROPORPHYRINOGEN III OXIDASE, MITOCHONDRIAL"/>
    <property type="match status" value="1"/>
</dbReference>
<dbReference type="PANTHER" id="PTHR10755:SF0">
    <property type="entry name" value="OXYGEN-DEPENDENT COPROPORPHYRINOGEN-III OXIDASE, MITOCHONDRIAL"/>
    <property type="match status" value="1"/>
</dbReference>
<dbReference type="Pfam" id="PF01218">
    <property type="entry name" value="Coprogen_oxidas"/>
    <property type="match status" value="1"/>
</dbReference>
<dbReference type="PIRSF" id="PIRSF000166">
    <property type="entry name" value="Coproporphyri_ox"/>
    <property type="match status" value="1"/>
</dbReference>
<dbReference type="PRINTS" id="PR00073">
    <property type="entry name" value="COPRGNOXDASE"/>
</dbReference>
<dbReference type="SUPFAM" id="SSF102886">
    <property type="entry name" value="Coproporphyrinogen III oxidase"/>
    <property type="match status" value="1"/>
</dbReference>
<dbReference type="PROSITE" id="PS01021">
    <property type="entry name" value="COPROGEN_OXIDASE"/>
    <property type="match status" value="1"/>
</dbReference>
<proteinExistence type="inferred from homology"/>
<name>HEM6_AROAE</name>
<keyword id="KW-0963">Cytoplasm</keyword>
<keyword id="KW-0350">Heme biosynthesis</keyword>
<keyword id="KW-0479">Metal-binding</keyword>
<keyword id="KW-0560">Oxidoreductase</keyword>
<keyword id="KW-0627">Porphyrin biosynthesis</keyword>
<keyword id="KW-1185">Reference proteome</keyword>
<evidence type="ECO:0000255" key="1">
    <source>
        <dbReference type="HAMAP-Rule" id="MF_00333"/>
    </source>
</evidence>
<organism>
    <name type="scientific">Aromatoleum aromaticum (strain DSM 19018 / LMG 30748 / EbN1)</name>
    <name type="common">Azoarcus sp. (strain EbN1)</name>
    <dbReference type="NCBI Taxonomy" id="76114"/>
    <lineage>
        <taxon>Bacteria</taxon>
        <taxon>Pseudomonadati</taxon>
        <taxon>Pseudomonadota</taxon>
        <taxon>Betaproteobacteria</taxon>
        <taxon>Rhodocyclales</taxon>
        <taxon>Rhodocyclaceae</taxon>
        <taxon>Aromatoleum</taxon>
    </lineage>
</organism>
<reference key="1">
    <citation type="journal article" date="2005" name="Arch. Microbiol.">
        <title>The genome sequence of an anaerobic aromatic-degrading denitrifying bacterium, strain EbN1.</title>
        <authorList>
            <person name="Rabus R."/>
            <person name="Kube M."/>
            <person name="Heider J."/>
            <person name="Beck A."/>
            <person name="Heitmann K."/>
            <person name="Widdel F."/>
            <person name="Reinhardt R."/>
        </authorList>
    </citation>
    <scope>NUCLEOTIDE SEQUENCE [LARGE SCALE GENOMIC DNA]</scope>
    <source>
        <strain>DSM 19018 / LMG 30748 / EbN1</strain>
    </source>
</reference>
<gene>
    <name evidence="1" type="primary">hemF</name>
    <name type="ordered locus">AZOSEA06090</name>
    <name type="ORF">ebA1156</name>
</gene>
<sequence>MGAPDSRVVRQHLLDLQSGIVAVLERFDGGRFREDAWQRPAGGGGITRVIEEGRFFERGGVNFSHVIGGAMPASATAHRPDLAGRTFEAMGVSLVLHPRNPYCPTVHMNVRFFIASHPEAAVPPPAAAPVWWFGGGMDLTPYYPYEEDVRNFHRACRAAVLPWGGEPEYRRLKEWCDRYFFLKHRNEPRGVGGLFFDDLGADGKTDFDAAFGLARSVGDAFLDAYLPIIERRRDVAYGERERDFQAYRRGRYVEFNLVFDRGTLFGLQSGGRTESILMSLPPVVKWRYDWQPEPGSAEARLYDEFLAPRDW</sequence>
<accession>Q5P7I0</accession>